<comment type="function">
    <text evidence="3">Prokaryotic-type aspartate aminotransferase. Specific for aspartate and no activity with glutamine, asparagine, alanine, histidine, leucine, methionine, lysine, arginine, tryptophan, tyrosine, phenylalanine or kynurenine.</text>
</comment>
<comment type="catalytic activity">
    <reaction evidence="3">
        <text>L-aspartate + 2-oxoglutarate = oxaloacetate + L-glutamate</text>
        <dbReference type="Rhea" id="RHEA:21824"/>
        <dbReference type="ChEBI" id="CHEBI:16452"/>
        <dbReference type="ChEBI" id="CHEBI:16810"/>
        <dbReference type="ChEBI" id="CHEBI:29985"/>
        <dbReference type="ChEBI" id="CHEBI:29991"/>
        <dbReference type="EC" id="2.6.1.1"/>
    </reaction>
</comment>
<comment type="cofactor">
    <cofactor evidence="3">
        <name>pyridoxal 5'-phosphate</name>
        <dbReference type="ChEBI" id="CHEBI:597326"/>
    </cofactor>
</comment>
<comment type="biophysicochemical properties">
    <kinetics>
        <KM evidence="3">2.5 mM for aspartate</KM>
        <KM evidence="3">1 mM for glutamate</KM>
        <KM evidence="3">150 uM for oxaloacetate</KM>
        <KM evidence="3">80 uM for 2-oxoglutarate</KM>
    </kinetics>
</comment>
<comment type="subunit">
    <text>Homodimer.</text>
</comment>
<comment type="subcellular location">
    <subcellularLocation>
        <location evidence="3">Plastid</location>
        <location evidence="3">Chloroplast</location>
    </subcellularLocation>
</comment>
<comment type="developmental stage">
    <text evidence="3">Not detected in the embryo, but accumulates upon germination of the seed and during seedling development.</text>
</comment>
<comment type="miscellaneous">
    <text>The orthologous protein in Arabidopsis has an additional glutamate/aspartate-prephenate aminotransferase activity.</text>
</comment>
<comment type="similarity">
    <text evidence="4">Belongs to the class-I pyridoxal-phosphate-dependent aminotransferase family.</text>
</comment>
<reference key="1">
    <citation type="journal article" date="2006" name="Plant J.">
        <title>Identification and functional analysis of a prokaryotic-type aspartate aminotransferase: implications for plant amino acid metabolism.</title>
        <authorList>
            <person name="de la Torre F."/>
            <person name="De Santis L."/>
            <person name="Suarez M.F."/>
            <person name="Crespillo R."/>
            <person name="Canovas F.M."/>
        </authorList>
    </citation>
    <scope>NUCLEOTIDE SEQUENCE [MRNA]</scope>
    <scope>FUNCTION</scope>
    <scope>CATALYTIC ACTIVITY</scope>
    <scope>COFACTOR</scope>
    <scope>BIOPHYSICOCHEMICAL PROPERTIES</scope>
    <scope>SUBCELLULAR LOCATION</scope>
    <scope>DEVELOPMENTAL STAGE</scope>
    <source>
        <tissue>Xylem</tissue>
    </source>
</reference>
<dbReference type="EC" id="2.6.1.1"/>
<dbReference type="EMBL" id="AJ628016">
    <property type="protein sequence ID" value="CAF31327.1"/>
    <property type="molecule type" value="mRNA"/>
</dbReference>
<dbReference type="SMR" id="Q5F4K8"/>
<dbReference type="BRENDA" id="2.6.1.1">
    <property type="organism ID" value="4852"/>
</dbReference>
<dbReference type="SABIO-RK" id="Q5F4K8"/>
<dbReference type="GO" id="GO:0009507">
    <property type="term" value="C:chloroplast"/>
    <property type="evidence" value="ECO:0007669"/>
    <property type="project" value="UniProtKB-SubCell"/>
</dbReference>
<dbReference type="GO" id="GO:0004069">
    <property type="term" value="F:L-aspartate:2-oxoglutarate aminotransferase activity"/>
    <property type="evidence" value="ECO:0007669"/>
    <property type="project" value="UniProtKB-EC"/>
</dbReference>
<dbReference type="GO" id="GO:0030170">
    <property type="term" value="F:pyridoxal phosphate binding"/>
    <property type="evidence" value="ECO:0007669"/>
    <property type="project" value="InterPro"/>
</dbReference>
<dbReference type="GO" id="GO:0006520">
    <property type="term" value="P:amino acid metabolic process"/>
    <property type="evidence" value="ECO:0007669"/>
    <property type="project" value="InterPro"/>
</dbReference>
<dbReference type="GO" id="GO:0009058">
    <property type="term" value="P:biosynthetic process"/>
    <property type="evidence" value="ECO:0007669"/>
    <property type="project" value="InterPro"/>
</dbReference>
<dbReference type="CDD" id="cd00609">
    <property type="entry name" value="AAT_like"/>
    <property type="match status" value="1"/>
</dbReference>
<dbReference type="FunFam" id="3.40.640.10:FF:000033">
    <property type="entry name" value="Aspartate aminotransferase"/>
    <property type="match status" value="1"/>
</dbReference>
<dbReference type="Gene3D" id="3.90.1150.10">
    <property type="entry name" value="Aspartate Aminotransferase, domain 1"/>
    <property type="match status" value="1"/>
</dbReference>
<dbReference type="Gene3D" id="3.40.640.10">
    <property type="entry name" value="Type I PLP-dependent aspartate aminotransferase-like (Major domain)"/>
    <property type="match status" value="1"/>
</dbReference>
<dbReference type="InterPro" id="IPR004839">
    <property type="entry name" value="Aminotransferase_I/II_large"/>
</dbReference>
<dbReference type="InterPro" id="IPR050596">
    <property type="entry name" value="AspAT/PAT-like"/>
</dbReference>
<dbReference type="InterPro" id="IPR004838">
    <property type="entry name" value="NHTrfase_class1_PyrdxlP-BS"/>
</dbReference>
<dbReference type="InterPro" id="IPR015424">
    <property type="entry name" value="PyrdxlP-dep_Trfase"/>
</dbReference>
<dbReference type="InterPro" id="IPR015421">
    <property type="entry name" value="PyrdxlP-dep_Trfase_major"/>
</dbReference>
<dbReference type="InterPro" id="IPR015422">
    <property type="entry name" value="PyrdxlP-dep_Trfase_small"/>
</dbReference>
<dbReference type="PANTHER" id="PTHR46383">
    <property type="entry name" value="ASPARTATE AMINOTRANSFERASE"/>
    <property type="match status" value="1"/>
</dbReference>
<dbReference type="PANTHER" id="PTHR46383:SF1">
    <property type="entry name" value="ASPARTATE AMINOTRANSFERASE"/>
    <property type="match status" value="1"/>
</dbReference>
<dbReference type="Pfam" id="PF00155">
    <property type="entry name" value="Aminotran_1_2"/>
    <property type="match status" value="1"/>
</dbReference>
<dbReference type="SUPFAM" id="SSF53383">
    <property type="entry name" value="PLP-dependent transferases"/>
    <property type="match status" value="1"/>
</dbReference>
<dbReference type="PROSITE" id="PS00105">
    <property type="entry name" value="AA_TRANSFER_CLASS_1"/>
    <property type="match status" value="1"/>
</dbReference>
<proteinExistence type="evidence at protein level"/>
<keyword id="KW-0032">Aminotransferase</keyword>
<keyword id="KW-0150">Chloroplast</keyword>
<keyword id="KW-0934">Plastid</keyword>
<keyword id="KW-0663">Pyridoxal phosphate</keyword>
<keyword id="KW-0808">Transferase</keyword>
<keyword id="KW-0809">Transit peptide</keyword>
<protein>
    <recommendedName>
        <fullName>Aspartate aminotransferase</fullName>
        <shortName>PpAAT</shortName>
        <ecNumber>2.6.1.1</ecNumber>
    </recommendedName>
</protein>
<sequence>MMSASFKCPVSLSGVENICNGDKAIPGINSRTLFTGSSFLQRHHSANKIFFRTCGKKGSCCLFNIRAMAETDSGNGVPQLDISLSPRVAALKPSKTMAITDLATALKQAGVPVIGLAAGEPDFNTPDAVAEAGIKAIQDGYTRYTPNAGTMEIRTAICHKLKEENGLSYTPDQILVSNGAKQCIMAAAVLAVCSPGDEVIIPAPFWVSYTEMARLADATPVIIPTLLSDDFLLNPEVFSSKLNENSRLLILCSPSNPTGSVYPRELLEEIAKIVAKHPKLLVLSDEIYEHIMYPPAKHTSFASLPGMWERTLTVNGFSKAFAMTGWRLGYLAGPKHFVTACGRIQSQSTSGASSISQKAGVAALALGYAGSEAVSTMVKAYRERRDFLVQRLQAMEGVKLPVPQGAFYLFPDFSSYYGTEVEDFGVINGSEALCRFFLEKAQVALVPGDAFGNDDCIRISYAASLDTLRTAINNIEKSLLLLRPAAAASKAS</sequence>
<name>PAT_PINPS</name>
<organism>
    <name type="scientific">Pinus pinaster</name>
    <name type="common">Maritime pine</name>
    <dbReference type="NCBI Taxonomy" id="71647"/>
    <lineage>
        <taxon>Eukaryota</taxon>
        <taxon>Viridiplantae</taxon>
        <taxon>Streptophyta</taxon>
        <taxon>Embryophyta</taxon>
        <taxon>Tracheophyta</taxon>
        <taxon>Spermatophyta</taxon>
        <taxon>Pinopsida</taxon>
        <taxon>Pinidae</taxon>
        <taxon>Conifers I</taxon>
        <taxon>Pinales</taxon>
        <taxon>Pinaceae</taxon>
        <taxon>Pinus</taxon>
        <taxon>Pinus subgen. Pinus</taxon>
    </lineage>
</organism>
<feature type="transit peptide" description="Chloroplast" evidence="2">
    <location>
        <begin position="1"/>
        <end position="66"/>
    </location>
</feature>
<feature type="chain" id="PRO_0000401476" description="Aspartate aminotransferase">
    <location>
        <begin position="67"/>
        <end position="492"/>
    </location>
</feature>
<feature type="binding site" evidence="1">
    <location>
        <position position="119"/>
    </location>
    <ligand>
        <name>L-aspartate</name>
        <dbReference type="ChEBI" id="CHEBI:29991"/>
    </ligand>
</feature>
<feature type="binding site" evidence="1">
    <location>
        <position position="206"/>
    </location>
    <ligand>
        <name>L-aspartate</name>
        <dbReference type="ChEBI" id="CHEBI:29991"/>
    </ligand>
</feature>
<feature type="binding site" evidence="1">
    <location>
        <position position="256"/>
    </location>
    <ligand>
        <name>L-aspartate</name>
        <dbReference type="ChEBI" id="CHEBI:29991"/>
    </ligand>
</feature>
<feature type="binding site" evidence="1">
    <location>
        <position position="458"/>
    </location>
    <ligand>
        <name>L-aspartate</name>
        <dbReference type="ChEBI" id="CHEBI:29991"/>
    </ligand>
</feature>
<feature type="modified residue" description="N6-(pyridoxal phosphate)lysine" evidence="1">
    <location>
        <position position="319"/>
    </location>
</feature>
<accession>Q5F4K8</accession>
<gene>
    <name type="primary">AAT</name>
</gene>
<evidence type="ECO:0000250" key="1"/>
<evidence type="ECO:0000255" key="2"/>
<evidence type="ECO:0000269" key="3">
    <source>
    </source>
</evidence>
<evidence type="ECO:0000305" key="4"/>